<reference key="1">
    <citation type="submission" date="2008-05" db="EMBL/GenBank/DDBJ databases">
        <title>Complete genome sequence of Clostridium botulinum E3 str. Alaska E43.</title>
        <authorList>
            <person name="Brinkac L.M."/>
            <person name="Brown J.L."/>
            <person name="Bruce D."/>
            <person name="Detter C."/>
            <person name="Munk C."/>
            <person name="Smith L.A."/>
            <person name="Smith T.J."/>
            <person name="Sutton G."/>
            <person name="Brettin T.S."/>
        </authorList>
    </citation>
    <scope>NUCLEOTIDE SEQUENCE [LARGE SCALE GENOMIC DNA]</scope>
    <source>
        <strain>Alaska E43 / Type E3</strain>
    </source>
</reference>
<keyword id="KW-0067">ATP-binding</keyword>
<keyword id="KW-0963">Cytoplasm</keyword>
<keyword id="KW-0418">Kinase</keyword>
<keyword id="KW-0520">NAD</keyword>
<keyword id="KW-0521">NADP</keyword>
<keyword id="KW-0547">Nucleotide-binding</keyword>
<keyword id="KW-0808">Transferase</keyword>
<gene>
    <name evidence="1" type="primary">nadK</name>
    <name type="ordered locus">CLH_2164</name>
</gene>
<organism>
    <name type="scientific">Clostridium botulinum (strain Alaska E43 / Type E3)</name>
    <dbReference type="NCBI Taxonomy" id="508767"/>
    <lineage>
        <taxon>Bacteria</taxon>
        <taxon>Bacillati</taxon>
        <taxon>Bacillota</taxon>
        <taxon>Clostridia</taxon>
        <taxon>Eubacteriales</taxon>
        <taxon>Clostridiaceae</taxon>
        <taxon>Clostridium</taxon>
    </lineage>
</organism>
<accession>B2V4R1</accession>
<protein>
    <recommendedName>
        <fullName evidence="1">NAD kinase</fullName>
        <ecNumber evidence="1">2.7.1.23</ecNumber>
    </recommendedName>
    <alternativeName>
        <fullName evidence="1">ATP-dependent NAD kinase</fullName>
    </alternativeName>
</protein>
<evidence type="ECO:0000255" key="1">
    <source>
        <dbReference type="HAMAP-Rule" id="MF_00361"/>
    </source>
</evidence>
<comment type="function">
    <text evidence="1">Involved in the regulation of the intracellular balance of NAD and NADP, and is a key enzyme in the biosynthesis of NADP. Catalyzes specifically the phosphorylation on 2'-hydroxyl of the adenosine moiety of NAD to yield NADP.</text>
</comment>
<comment type="catalytic activity">
    <reaction evidence="1">
        <text>NAD(+) + ATP = ADP + NADP(+) + H(+)</text>
        <dbReference type="Rhea" id="RHEA:18629"/>
        <dbReference type="ChEBI" id="CHEBI:15378"/>
        <dbReference type="ChEBI" id="CHEBI:30616"/>
        <dbReference type="ChEBI" id="CHEBI:57540"/>
        <dbReference type="ChEBI" id="CHEBI:58349"/>
        <dbReference type="ChEBI" id="CHEBI:456216"/>
        <dbReference type="EC" id="2.7.1.23"/>
    </reaction>
</comment>
<comment type="cofactor">
    <cofactor evidence="1">
        <name>a divalent metal cation</name>
        <dbReference type="ChEBI" id="CHEBI:60240"/>
    </cofactor>
</comment>
<comment type="subcellular location">
    <subcellularLocation>
        <location evidence="1">Cytoplasm</location>
    </subcellularLocation>
</comment>
<comment type="similarity">
    <text evidence="1">Belongs to the NAD kinase family.</text>
</comment>
<sequence>MKNIGIAINPSKDYKNTILNMVKEKIENICNVTDIEVYNSFDIKNLNLSSLDLLIVLGGDGTLLGVARELEDDFKAPILGINIGNLGVLSSIEISDLELALKKLMTKDCKVHKRMMLNCEVDINESIKNIKALNEVAVARGTLSRMVKFKIFVDEKLYAIFKGDGLIVSTPTGSTAYSFSAGGPFICPDLEVISIVPICDHTKSMHPIVLKGDSTIKIIAENGGDQIYLTIDGQRAIEMKDNSVITVKKNPKSLKLLLFNDYDYFKVIRNKVLNNSKECDGEEI</sequence>
<feature type="chain" id="PRO_1000120844" description="NAD kinase">
    <location>
        <begin position="1"/>
        <end position="284"/>
    </location>
</feature>
<feature type="active site" description="Proton acceptor" evidence="1">
    <location>
        <position position="60"/>
    </location>
</feature>
<feature type="binding site" evidence="1">
    <location>
        <begin position="60"/>
        <end position="61"/>
    </location>
    <ligand>
        <name>NAD(+)</name>
        <dbReference type="ChEBI" id="CHEBI:57540"/>
    </ligand>
</feature>
<feature type="binding site" evidence="1">
    <location>
        <begin position="134"/>
        <end position="135"/>
    </location>
    <ligand>
        <name>NAD(+)</name>
        <dbReference type="ChEBI" id="CHEBI:57540"/>
    </ligand>
</feature>
<feature type="binding site" evidence="1">
    <location>
        <position position="145"/>
    </location>
    <ligand>
        <name>NAD(+)</name>
        <dbReference type="ChEBI" id="CHEBI:57540"/>
    </ligand>
</feature>
<feature type="binding site" evidence="1">
    <location>
        <position position="162"/>
    </location>
    <ligand>
        <name>NAD(+)</name>
        <dbReference type="ChEBI" id="CHEBI:57540"/>
    </ligand>
</feature>
<feature type="binding site" evidence="1">
    <location>
        <position position="164"/>
    </location>
    <ligand>
        <name>NAD(+)</name>
        <dbReference type="ChEBI" id="CHEBI:57540"/>
    </ligand>
</feature>
<feature type="binding site" evidence="1">
    <location>
        <begin position="175"/>
        <end position="180"/>
    </location>
    <ligand>
        <name>NAD(+)</name>
        <dbReference type="ChEBI" id="CHEBI:57540"/>
    </ligand>
</feature>
<feature type="binding site" evidence="1">
    <location>
        <position position="234"/>
    </location>
    <ligand>
        <name>NAD(+)</name>
        <dbReference type="ChEBI" id="CHEBI:57540"/>
    </ligand>
</feature>
<proteinExistence type="inferred from homology"/>
<dbReference type="EC" id="2.7.1.23" evidence="1"/>
<dbReference type="EMBL" id="CP001078">
    <property type="protein sequence ID" value="ACD53604.1"/>
    <property type="molecule type" value="Genomic_DNA"/>
</dbReference>
<dbReference type="RefSeq" id="WP_003374621.1">
    <property type="nucleotide sequence ID" value="NC_010723.1"/>
</dbReference>
<dbReference type="SMR" id="B2V4R1"/>
<dbReference type="KEGG" id="cbt:CLH_2164"/>
<dbReference type="HOGENOM" id="CLU_008831_0_1_9"/>
<dbReference type="GO" id="GO:0005737">
    <property type="term" value="C:cytoplasm"/>
    <property type="evidence" value="ECO:0007669"/>
    <property type="project" value="UniProtKB-SubCell"/>
</dbReference>
<dbReference type="GO" id="GO:0005524">
    <property type="term" value="F:ATP binding"/>
    <property type="evidence" value="ECO:0007669"/>
    <property type="project" value="UniProtKB-KW"/>
</dbReference>
<dbReference type="GO" id="GO:0046872">
    <property type="term" value="F:metal ion binding"/>
    <property type="evidence" value="ECO:0007669"/>
    <property type="project" value="UniProtKB-UniRule"/>
</dbReference>
<dbReference type="GO" id="GO:0051287">
    <property type="term" value="F:NAD binding"/>
    <property type="evidence" value="ECO:0007669"/>
    <property type="project" value="UniProtKB-ARBA"/>
</dbReference>
<dbReference type="GO" id="GO:0003951">
    <property type="term" value="F:NAD+ kinase activity"/>
    <property type="evidence" value="ECO:0007669"/>
    <property type="project" value="UniProtKB-UniRule"/>
</dbReference>
<dbReference type="GO" id="GO:0019674">
    <property type="term" value="P:NAD metabolic process"/>
    <property type="evidence" value="ECO:0007669"/>
    <property type="project" value="InterPro"/>
</dbReference>
<dbReference type="GO" id="GO:0006741">
    <property type="term" value="P:NADP biosynthetic process"/>
    <property type="evidence" value="ECO:0007669"/>
    <property type="project" value="UniProtKB-UniRule"/>
</dbReference>
<dbReference type="Gene3D" id="3.40.50.10330">
    <property type="entry name" value="Probable inorganic polyphosphate/atp-NAD kinase, domain 1"/>
    <property type="match status" value="1"/>
</dbReference>
<dbReference type="Gene3D" id="2.60.200.30">
    <property type="entry name" value="Probable inorganic polyphosphate/atp-NAD kinase, domain 2"/>
    <property type="match status" value="1"/>
</dbReference>
<dbReference type="HAMAP" id="MF_00361">
    <property type="entry name" value="NAD_kinase"/>
    <property type="match status" value="1"/>
</dbReference>
<dbReference type="InterPro" id="IPR017438">
    <property type="entry name" value="ATP-NAD_kinase_N"/>
</dbReference>
<dbReference type="InterPro" id="IPR017437">
    <property type="entry name" value="ATP-NAD_kinase_PpnK-typ_C"/>
</dbReference>
<dbReference type="InterPro" id="IPR016064">
    <property type="entry name" value="NAD/diacylglycerol_kinase_sf"/>
</dbReference>
<dbReference type="InterPro" id="IPR002504">
    <property type="entry name" value="NADK"/>
</dbReference>
<dbReference type="PANTHER" id="PTHR20275">
    <property type="entry name" value="NAD KINASE"/>
    <property type="match status" value="1"/>
</dbReference>
<dbReference type="PANTHER" id="PTHR20275:SF0">
    <property type="entry name" value="NAD KINASE"/>
    <property type="match status" value="1"/>
</dbReference>
<dbReference type="Pfam" id="PF01513">
    <property type="entry name" value="NAD_kinase"/>
    <property type="match status" value="1"/>
</dbReference>
<dbReference type="Pfam" id="PF20143">
    <property type="entry name" value="NAD_kinase_C"/>
    <property type="match status" value="1"/>
</dbReference>
<dbReference type="SUPFAM" id="SSF111331">
    <property type="entry name" value="NAD kinase/diacylglycerol kinase-like"/>
    <property type="match status" value="1"/>
</dbReference>
<name>NADK_CLOBA</name>